<protein>
    <recommendedName>
        <fullName>Staphopain A</fullName>
        <ecNumber>3.4.22.48</ecNumber>
    </recommendedName>
    <alternativeName>
        <fullName>Staphylococcal cysteine proteinase A</fullName>
    </alternativeName>
    <alternativeName>
        <fullName>Staphylopain A</fullName>
    </alternativeName>
</protein>
<name>SSPP_STAAN</name>
<organism>
    <name type="scientific">Staphylococcus aureus (strain N315)</name>
    <dbReference type="NCBI Taxonomy" id="158879"/>
    <lineage>
        <taxon>Bacteria</taxon>
        <taxon>Bacillati</taxon>
        <taxon>Bacillota</taxon>
        <taxon>Bacilli</taxon>
        <taxon>Bacillales</taxon>
        <taxon>Staphylococcaceae</taxon>
        <taxon>Staphylococcus</taxon>
    </lineage>
</organism>
<feature type="signal peptide" evidence="3">
    <location>
        <begin position="1"/>
        <end position="25"/>
    </location>
</feature>
<feature type="propeptide" id="PRO_0000026551" evidence="1">
    <location>
        <begin position="26"/>
        <end position="214"/>
    </location>
</feature>
<feature type="chain" id="PRO_0000026552" description="Staphopain A">
    <location>
        <begin position="215"/>
        <end position="388"/>
    </location>
</feature>
<feature type="active site" evidence="4">
    <location>
        <position position="238"/>
    </location>
</feature>
<feature type="active site" evidence="4">
    <location>
        <position position="334"/>
    </location>
</feature>
<feature type="active site" evidence="4">
    <location>
        <position position="355"/>
    </location>
</feature>
<feature type="site" description="Cleavage" evidence="1">
    <location>
        <begin position="214"/>
        <end position="215"/>
    </location>
</feature>
<sequence>MKRNFPKLIALSLIFSLSVTPIANAESNSNIKAKDKKHVQVNVEDKSVPTDVRNLAQKDYLSYVTSLDKIYNKEKASYTLGEPFKIYKFNKKSDGNYYFPVLNTEGNIDYIVTISPKITKYSSSSSKYTINVSPFLSKVLNQYKDQQITILTNSKGYYVVTQNHKAKLVLKTPRLEDKKLKKTESIPTGNNVTQLKQKASVTMPTSQFKSNNYTYNEQYINKLENFKIRETQGNNGWCAGYTMSALLNATYNTNKYHAEAVMRFLHPNLQGQRFQFTGLTPREMIYFGQTQGRSPQLLNRMTTYNEVDNLTKNNKGIAVLGSRVESRNGMHAGHAMAVVGNAKLDNGQEVIIIWNPWDNGFMTQDAKNNVIPVSNGDHYRWYSSIYGY</sequence>
<evidence type="ECO:0000250" key="1"/>
<evidence type="ECO:0000250" key="2">
    <source>
        <dbReference type="UniProtKB" id="P81297"/>
    </source>
</evidence>
<evidence type="ECO:0000255" key="3"/>
<evidence type="ECO:0000255" key="4">
    <source>
        <dbReference type="PROSITE-ProRule" id="PRU10089"/>
    </source>
</evidence>
<evidence type="ECO:0000305" key="5"/>
<proteinExistence type="inferred from homology"/>
<reference key="1">
    <citation type="journal article" date="2001" name="Lancet">
        <title>Whole genome sequencing of meticillin-resistant Staphylococcus aureus.</title>
        <authorList>
            <person name="Kuroda M."/>
            <person name="Ohta T."/>
            <person name="Uchiyama I."/>
            <person name="Baba T."/>
            <person name="Yuzawa H."/>
            <person name="Kobayashi I."/>
            <person name="Cui L."/>
            <person name="Oguchi A."/>
            <person name="Aoki K."/>
            <person name="Nagai Y."/>
            <person name="Lian J.-Q."/>
            <person name="Ito T."/>
            <person name="Kanamori M."/>
            <person name="Matsumaru H."/>
            <person name="Maruyama A."/>
            <person name="Murakami H."/>
            <person name="Hosoyama A."/>
            <person name="Mizutani-Ui Y."/>
            <person name="Takahashi N.K."/>
            <person name="Sawano T."/>
            <person name="Inoue R."/>
            <person name="Kaito C."/>
            <person name="Sekimizu K."/>
            <person name="Hirakawa H."/>
            <person name="Kuhara S."/>
            <person name="Goto S."/>
            <person name="Yabuzaki J."/>
            <person name="Kanehisa M."/>
            <person name="Yamashita A."/>
            <person name="Oshima K."/>
            <person name="Furuya K."/>
            <person name="Yoshino C."/>
            <person name="Shiba T."/>
            <person name="Hattori M."/>
            <person name="Ogasawara N."/>
            <person name="Hayashi H."/>
            <person name="Hiramatsu K."/>
        </authorList>
    </citation>
    <scope>NUCLEOTIDE SEQUENCE [LARGE SCALE GENOMIC DNA]</scope>
    <source>
        <strain>N315</strain>
    </source>
</reference>
<keyword id="KW-0378">Hydrolase</keyword>
<keyword id="KW-0645">Protease</keyword>
<keyword id="KW-0964">Secreted</keyword>
<keyword id="KW-0732">Signal</keyword>
<keyword id="KW-0788">Thiol protease</keyword>
<keyword id="KW-0843">Virulence</keyword>
<keyword id="KW-0865">Zymogen</keyword>
<accession>P65826</accession>
<accession>Q99SX8</accession>
<gene>
    <name type="primary">sspP</name>
    <name type="synonym">scpA</name>
    <name type="ordered locus">SA1725</name>
</gene>
<comment type="function">
    <text evidence="2">Cysteine protease that plays an important role in the inhibition of host innate immune response. Cleaves host elastins found in connective tissues, pulmonary surfactant protein A in the lungs, and the chemokine receptor CXCR2 on leukocytes. Proteolytic cleavage of surfactant protein A impairs bacterial phagocytosis by neutrophils while CXCR2 degradation blocks neutrophil activation and chemotaxis. Additionally, promotes vascular leakage by activating the plasma kallikerin/kinin system, resulting in hypotension.</text>
</comment>
<comment type="catalytic activity">
    <reaction>
        <text>Broad endopeptidase action on proteins including elastin, but rather limited hydrolysis of small-molecule substrates. Assays are conveniently made with hemoglobin, casein or Z-Phe-Arg-NHMec as substrate.</text>
        <dbReference type="EC" id="3.4.22.48"/>
    </reaction>
</comment>
<comment type="activity regulation">
    <text evidence="1">Prematurely activated/folded staphopain A is inhibited by staphostatin A (ScpB), which is probably required to protect staphylococcal cytoplasmic proteins from degradation by ScpA.</text>
</comment>
<comment type="subunit">
    <text evidence="1">In the cytoplasm, prematurely activated/folded ScpA forms a stable non-covalent complex with ScpB.</text>
</comment>
<comment type="subcellular location">
    <subcellularLocation>
        <location evidence="2">Secreted</location>
    </subcellularLocation>
</comment>
<comment type="PTM">
    <text evidence="1">Cleavage leads to the activation of ScpA probably by an auto-catalytic manner.</text>
</comment>
<comment type="miscellaneous">
    <text evidence="1">The catalytic maturation of ScpA appears to reside outside the cascade of activation started by the metalloprotease aureolysin (aur).</text>
</comment>
<comment type="similarity">
    <text evidence="5">Belongs to the peptidase C47 family.</text>
</comment>
<dbReference type="EC" id="3.4.22.48"/>
<dbReference type="EMBL" id="BA000018">
    <property type="protein sequence ID" value="BAB42995.1"/>
    <property type="molecule type" value="Genomic_DNA"/>
</dbReference>
<dbReference type="PIR" id="D89979">
    <property type="entry name" value="D89979"/>
</dbReference>
<dbReference type="RefSeq" id="WP_000827746.1">
    <property type="nucleotide sequence ID" value="NC_002745.2"/>
</dbReference>
<dbReference type="SMR" id="P65826"/>
<dbReference type="MEROPS" id="C47.001"/>
<dbReference type="EnsemblBacteria" id="BAB42995">
    <property type="protein sequence ID" value="BAB42995"/>
    <property type="gene ID" value="BAB42995"/>
</dbReference>
<dbReference type="KEGG" id="sau:SA1725"/>
<dbReference type="HOGENOM" id="CLU_069043_0_0_9"/>
<dbReference type="PHI-base" id="PHI:11229"/>
<dbReference type="PRO" id="PR:P65826"/>
<dbReference type="GO" id="GO:0005576">
    <property type="term" value="C:extracellular region"/>
    <property type="evidence" value="ECO:0007669"/>
    <property type="project" value="UniProtKB-SubCell"/>
</dbReference>
<dbReference type="GO" id="GO:0008234">
    <property type="term" value="F:cysteine-type peptidase activity"/>
    <property type="evidence" value="ECO:0007669"/>
    <property type="project" value="UniProtKB-KW"/>
</dbReference>
<dbReference type="GO" id="GO:0006508">
    <property type="term" value="P:proteolysis"/>
    <property type="evidence" value="ECO:0007669"/>
    <property type="project" value="UniProtKB-KW"/>
</dbReference>
<dbReference type="Gene3D" id="3.90.70.10">
    <property type="entry name" value="Cysteine proteinases"/>
    <property type="match status" value="1"/>
</dbReference>
<dbReference type="Gene3D" id="3.10.500.10">
    <property type="entry name" value="Staphopain proregion domain"/>
    <property type="match status" value="1"/>
</dbReference>
<dbReference type="InterPro" id="IPR046350">
    <property type="entry name" value="Cystatin_sf"/>
</dbReference>
<dbReference type="InterPro" id="IPR038765">
    <property type="entry name" value="Papain-like_cys_pep_sf"/>
</dbReference>
<dbReference type="InterPro" id="IPR025660">
    <property type="entry name" value="Pept_his_AS"/>
</dbReference>
<dbReference type="InterPro" id="IPR008750">
    <property type="entry name" value="Peptidase_C47"/>
</dbReference>
<dbReference type="InterPro" id="IPR028076">
    <property type="entry name" value="Staphopain_pro"/>
</dbReference>
<dbReference type="InterPro" id="IPR037155">
    <property type="entry name" value="Staphopain_pro_sf"/>
</dbReference>
<dbReference type="Pfam" id="PF05543">
    <property type="entry name" value="Peptidase_C47"/>
    <property type="match status" value="1"/>
</dbReference>
<dbReference type="Pfam" id="PF14731">
    <property type="entry name" value="Staphopain_pro"/>
    <property type="match status" value="1"/>
</dbReference>
<dbReference type="SUPFAM" id="SSF54403">
    <property type="entry name" value="Cystatin/monellin"/>
    <property type="match status" value="1"/>
</dbReference>
<dbReference type="SUPFAM" id="SSF54001">
    <property type="entry name" value="Cysteine proteinases"/>
    <property type="match status" value="1"/>
</dbReference>
<dbReference type="PROSITE" id="PS00639">
    <property type="entry name" value="THIOL_PROTEASE_HIS"/>
    <property type="match status" value="1"/>
</dbReference>